<protein>
    <recommendedName>
        <fullName evidence="1">Urease subunit gamma</fullName>
        <ecNumber evidence="1">3.5.1.5</ecNumber>
    </recommendedName>
    <alternativeName>
        <fullName evidence="1">Urea amidohydrolase subunit gamma</fullName>
    </alternativeName>
</protein>
<sequence length="100" mass="11092">MNLTPREKDKLLISMAAMVARRRLERGVKLNYPEAIALISDFVVEGARDGRPVAELMEAGAHVIGRDQVMEGIAEMIHDVQVEATFPDGTKLVTVHEPIR</sequence>
<organism>
    <name type="scientific">Rhizobium etli (strain CIAT 652)</name>
    <dbReference type="NCBI Taxonomy" id="491916"/>
    <lineage>
        <taxon>Bacteria</taxon>
        <taxon>Pseudomonadati</taxon>
        <taxon>Pseudomonadota</taxon>
        <taxon>Alphaproteobacteria</taxon>
        <taxon>Hyphomicrobiales</taxon>
        <taxon>Rhizobiaceae</taxon>
        <taxon>Rhizobium/Agrobacterium group</taxon>
        <taxon>Rhizobium</taxon>
    </lineage>
</organism>
<gene>
    <name evidence="1" type="primary">ureA</name>
    <name type="ordered locus">RHECIAT_CH0003553</name>
</gene>
<keyword id="KW-0963">Cytoplasm</keyword>
<keyword id="KW-0378">Hydrolase</keyword>
<proteinExistence type="inferred from homology"/>
<name>URE3_RHIE6</name>
<feature type="chain" id="PRO_1000199878" description="Urease subunit gamma">
    <location>
        <begin position="1"/>
        <end position="100"/>
    </location>
</feature>
<reference key="1">
    <citation type="journal article" date="2010" name="Appl. Environ. Microbiol.">
        <title>Conserved symbiotic plasmid DNA sequences in the multireplicon pangenomic structure of Rhizobium etli.</title>
        <authorList>
            <person name="Gonzalez V."/>
            <person name="Acosta J.L."/>
            <person name="Santamaria R.I."/>
            <person name="Bustos P."/>
            <person name="Fernandez J.L."/>
            <person name="Hernandez Gonzalez I.L."/>
            <person name="Diaz R."/>
            <person name="Flores M."/>
            <person name="Palacios R."/>
            <person name="Mora J."/>
            <person name="Davila G."/>
        </authorList>
    </citation>
    <scope>NUCLEOTIDE SEQUENCE [LARGE SCALE GENOMIC DNA]</scope>
    <source>
        <strain>CIAT 652</strain>
    </source>
</reference>
<comment type="catalytic activity">
    <reaction evidence="1">
        <text>urea + 2 H2O + H(+) = hydrogencarbonate + 2 NH4(+)</text>
        <dbReference type="Rhea" id="RHEA:20557"/>
        <dbReference type="ChEBI" id="CHEBI:15377"/>
        <dbReference type="ChEBI" id="CHEBI:15378"/>
        <dbReference type="ChEBI" id="CHEBI:16199"/>
        <dbReference type="ChEBI" id="CHEBI:17544"/>
        <dbReference type="ChEBI" id="CHEBI:28938"/>
        <dbReference type="EC" id="3.5.1.5"/>
    </reaction>
</comment>
<comment type="pathway">
    <text evidence="1">Nitrogen metabolism; urea degradation; CO(2) and NH(3) from urea (urease route): step 1/1.</text>
</comment>
<comment type="subunit">
    <text evidence="1">Heterotrimer of UreA (gamma), UreB (beta) and UreC (alpha) subunits. Three heterotrimers associate to form the active enzyme.</text>
</comment>
<comment type="subcellular location">
    <subcellularLocation>
        <location evidence="1">Cytoplasm</location>
    </subcellularLocation>
</comment>
<comment type="similarity">
    <text evidence="1">Belongs to the urease gamma subunit family.</text>
</comment>
<accession>B3PXB8</accession>
<evidence type="ECO:0000255" key="1">
    <source>
        <dbReference type="HAMAP-Rule" id="MF_00739"/>
    </source>
</evidence>
<dbReference type="EC" id="3.5.1.5" evidence="1"/>
<dbReference type="EMBL" id="CP001074">
    <property type="protein sequence ID" value="ACE92499.1"/>
    <property type="molecule type" value="Genomic_DNA"/>
</dbReference>
<dbReference type="SMR" id="B3PXB8"/>
<dbReference type="KEGG" id="rec:RHECIAT_CH0003553"/>
<dbReference type="eggNOG" id="COG0831">
    <property type="taxonomic scope" value="Bacteria"/>
</dbReference>
<dbReference type="HOGENOM" id="CLU_145825_1_0_5"/>
<dbReference type="UniPathway" id="UPA00258">
    <property type="reaction ID" value="UER00370"/>
</dbReference>
<dbReference type="Proteomes" id="UP000008817">
    <property type="component" value="Chromosome"/>
</dbReference>
<dbReference type="GO" id="GO:0005737">
    <property type="term" value="C:cytoplasm"/>
    <property type="evidence" value="ECO:0007669"/>
    <property type="project" value="UniProtKB-SubCell"/>
</dbReference>
<dbReference type="GO" id="GO:0016151">
    <property type="term" value="F:nickel cation binding"/>
    <property type="evidence" value="ECO:0007669"/>
    <property type="project" value="InterPro"/>
</dbReference>
<dbReference type="GO" id="GO:0009039">
    <property type="term" value="F:urease activity"/>
    <property type="evidence" value="ECO:0007669"/>
    <property type="project" value="UniProtKB-UniRule"/>
</dbReference>
<dbReference type="GO" id="GO:0043419">
    <property type="term" value="P:urea catabolic process"/>
    <property type="evidence" value="ECO:0007669"/>
    <property type="project" value="UniProtKB-UniRule"/>
</dbReference>
<dbReference type="CDD" id="cd00390">
    <property type="entry name" value="Urease_gamma"/>
    <property type="match status" value="1"/>
</dbReference>
<dbReference type="Gene3D" id="3.30.280.10">
    <property type="entry name" value="Urease, gamma-like subunit"/>
    <property type="match status" value="1"/>
</dbReference>
<dbReference type="HAMAP" id="MF_00739">
    <property type="entry name" value="Urease_gamma"/>
    <property type="match status" value="1"/>
</dbReference>
<dbReference type="InterPro" id="IPR012010">
    <property type="entry name" value="Urease_gamma"/>
</dbReference>
<dbReference type="InterPro" id="IPR002026">
    <property type="entry name" value="Urease_gamma/gamma-beta_su"/>
</dbReference>
<dbReference type="InterPro" id="IPR036463">
    <property type="entry name" value="Urease_gamma_sf"/>
</dbReference>
<dbReference type="InterPro" id="IPR050069">
    <property type="entry name" value="Urease_subunit"/>
</dbReference>
<dbReference type="NCBIfam" id="NF009712">
    <property type="entry name" value="PRK13241.1"/>
    <property type="match status" value="1"/>
</dbReference>
<dbReference type="NCBIfam" id="TIGR00193">
    <property type="entry name" value="urease_gam"/>
    <property type="match status" value="1"/>
</dbReference>
<dbReference type="PANTHER" id="PTHR33569">
    <property type="entry name" value="UREASE"/>
    <property type="match status" value="1"/>
</dbReference>
<dbReference type="PANTHER" id="PTHR33569:SF1">
    <property type="entry name" value="UREASE"/>
    <property type="match status" value="1"/>
</dbReference>
<dbReference type="Pfam" id="PF00547">
    <property type="entry name" value="Urease_gamma"/>
    <property type="match status" value="1"/>
</dbReference>
<dbReference type="PIRSF" id="PIRSF001223">
    <property type="entry name" value="Urease_gamma"/>
    <property type="match status" value="1"/>
</dbReference>
<dbReference type="SUPFAM" id="SSF54111">
    <property type="entry name" value="Urease, gamma-subunit"/>
    <property type="match status" value="1"/>
</dbReference>